<reference key="1">
    <citation type="journal article" date="2006" name="Proc. Natl. Acad. Sci. U.S.A.">
        <title>Molecular genetic anatomy of inter- and intraserotype variation in the human bacterial pathogen group A Streptococcus.</title>
        <authorList>
            <person name="Beres S.B."/>
            <person name="Richter E.W."/>
            <person name="Nagiec M.J."/>
            <person name="Sumby P."/>
            <person name="Porcella S.F."/>
            <person name="DeLeo F.R."/>
            <person name="Musser J.M."/>
        </authorList>
    </citation>
    <scope>NUCLEOTIDE SEQUENCE [LARGE SCALE GENOMIC DNA]</scope>
    <source>
        <strain>MGAS10750</strain>
    </source>
</reference>
<comment type="catalytic activity">
    <reaction evidence="1">
        <text>tRNA(Leu) + L-leucine + ATP = L-leucyl-tRNA(Leu) + AMP + diphosphate</text>
        <dbReference type="Rhea" id="RHEA:11688"/>
        <dbReference type="Rhea" id="RHEA-COMP:9613"/>
        <dbReference type="Rhea" id="RHEA-COMP:9622"/>
        <dbReference type="ChEBI" id="CHEBI:30616"/>
        <dbReference type="ChEBI" id="CHEBI:33019"/>
        <dbReference type="ChEBI" id="CHEBI:57427"/>
        <dbReference type="ChEBI" id="CHEBI:78442"/>
        <dbReference type="ChEBI" id="CHEBI:78494"/>
        <dbReference type="ChEBI" id="CHEBI:456215"/>
        <dbReference type="EC" id="6.1.1.4"/>
    </reaction>
</comment>
<comment type="subcellular location">
    <subcellularLocation>
        <location evidence="1">Cytoplasm</location>
    </subcellularLocation>
</comment>
<comment type="similarity">
    <text evidence="1">Belongs to the class-I aminoacyl-tRNA synthetase family.</text>
</comment>
<gene>
    <name evidence="1" type="primary">leuS</name>
    <name type="ordered locus">MGAS10750_Spy0153</name>
</gene>
<name>SYL_STRPF</name>
<keyword id="KW-0030">Aminoacyl-tRNA synthetase</keyword>
<keyword id="KW-0067">ATP-binding</keyword>
<keyword id="KW-0963">Cytoplasm</keyword>
<keyword id="KW-0436">Ligase</keyword>
<keyword id="KW-0547">Nucleotide-binding</keyword>
<keyword id="KW-0648">Protein biosynthesis</keyword>
<organism>
    <name type="scientific">Streptococcus pyogenes serotype M4 (strain MGAS10750)</name>
    <dbReference type="NCBI Taxonomy" id="370554"/>
    <lineage>
        <taxon>Bacteria</taxon>
        <taxon>Bacillati</taxon>
        <taxon>Bacillota</taxon>
        <taxon>Bacilli</taxon>
        <taxon>Lactobacillales</taxon>
        <taxon>Streptococcaceae</taxon>
        <taxon>Streptococcus</taxon>
    </lineage>
</organism>
<protein>
    <recommendedName>
        <fullName evidence="1">Leucine--tRNA ligase</fullName>
        <ecNumber evidence="1">6.1.1.4</ecNumber>
    </recommendedName>
    <alternativeName>
        <fullName evidence="1">Leucyl-tRNA synthetase</fullName>
        <shortName evidence="1">LeuRS</shortName>
    </alternativeName>
</protein>
<evidence type="ECO:0000255" key="1">
    <source>
        <dbReference type="HAMAP-Rule" id="MF_00049"/>
    </source>
</evidence>
<feature type="chain" id="PRO_1000009447" description="Leucine--tRNA ligase">
    <location>
        <begin position="1"/>
        <end position="833"/>
    </location>
</feature>
<feature type="short sequence motif" description="'HIGH' region">
    <location>
        <begin position="41"/>
        <end position="52"/>
    </location>
</feature>
<feature type="short sequence motif" description="'KMSKS' region">
    <location>
        <begin position="610"/>
        <end position="614"/>
    </location>
</feature>
<feature type="binding site" evidence="1">
    <location>
        <position position="613"/>
    </location>
    <ligand>
        <name>ATP</name>
        <dbReference type="ChEBI" id="CHEBI:30616"/>
    </ligand>
</feature>
<dbReference type="EC" id="6.1.1.4" evidence="1"/>
<dbReference type="EMBL" id="CP000262">
    <property type="protein sequence ID" value="ABF37103.1"/>
    <property type="molecule type" value="Genomic_DNA"/>
</dbReference>
<dbReference type="SMR" id="Q1J8Q8"/>
<dbReference type="KEGG" id="spi:MGAS10750_Spy0153"/>
<dbReference type="HOGENOM" id="CLU_004427_0_0_9"/>
<dbReference type="Proteomes" id="UP000002434">
    <property type="component" value="Chromosome"/>
</dbReference>
<dbReference type="GO" id="GO:0005829">
    <property type="term" value="C:cytosol"/>
    <property type="evidence" value="ECO:0007669"/>
    <property type="project" value="TreeGrafter"/>
</dbReference>
<dbReference type="GO" id="GO:0002161">
    <property type="term" value="F:aminoacyl-tRNA deacylase activity"/>
    <property type="evidence" value="ECO:0007669"/>
    <property type="project" value="InterPro"/>
</dbReference>
<dbReference type="GO" id="GO:0005524">
    <property type="term" value="F:ATP binding"/>
    <property type="evidence" value="ECO:0007669"/>
    <property type="project" value="UniProtKB-UniRule"/>
</dbReference>
<dbReference type="GO" id="GO:0004823">
    <property type="term" value="F:leucine-tRNA ligase activity"/>
    <property type="evidence" value="ECO:0007669"/>
    <property type="project" value="UniProtKB-UniRule"/>
</dbReference>
<dbReference type="GO" id="GO:0006429">
    <property type="term" value="P:leucyl-tRNA aminoacylation"/>
    <property type="evidence" value="ECO:0007669"/>
    <property type="project" value="UniProtKB-UniRule"/>
</dbReference>
<dbReference type="CDD" id="cd07958">
    <property type="entry name" value="Anticodon_Ia_Leu_BEm"/>
    <property type="match status" value="1"/>
</dbReference>
<dbReference type="CDD" id="cd00812">
    <property type="entry name" value="LeuRS_core"/>
    <property type="match status" value="1"/>
</dbReference>
<dbReference type="FunFam" id="1.10.730.10:FF:000012">
    <property type="entry name" value="Leucine--tRNA ligase"/>
    <property type="match status" value="1"/>
</dbReference>
<dbReference type="FunFam" id="3.40.50.620:FF:000056">
    <property type="entry name" value="Leucine--tRNA ligase"/>
    <property type="match status" value="1"/>
</dbReference>
<dbReference type="FunFam" id="3.40.50.620:FF:000077">
    <property type="entry name" value="Leucine--tRNA ligase"/>
    <property type="match status" value="1"/>
</dbReference>
<dbReference type="FunFam" id="1.10.730.10:FF:000011">
    <property type="entry name" value="Leucine--tRNA ligase chloroplastic/mitochondrial"/>
    <property type="match status" value="1"/>
</dbReference>
<dbReference type="Gene3D" id="3.40.50.620">
    <property type="entry name" value="HUPs"/>
    <property type="match status" value="2"/>
</dbReference>
<dbReference type="Gene3D" id="1.10.730.10">
    <property type="entry name" value="Isoleucyl-tRNA Synthetase, Domain 1"/>
    <property type="match status" value="1"/>
</dbReference>
<dbReference type="HAMAP" id="MF_00049_B">
    <property type="entry name" value="Leu_tRNA_synth_B"/>
    <property type="match status" value="1"/>
</dbReference>
<dbReference type="InterPro" id="IPR001412">
    <property type="entry name" value="aa-tRNA-synth_I_CS"/>
</dbReference>
<dbReference type="InterPro" id="IPR002300">
    <property type="entry name" value="aa-tRNA-synth_Ia"/>
</dbReference>
<dbReference type="InterPro" id="IPR002302">
    <property type="entry name" value="Leu-tRNA-ligase"/>
</dbReference>
<dbReference type="InterPro" id="IPR025709">
    <property type="entry name" value="Leu_tRNA-synth_edit"/>
</dbReference>
<dbReference type="InterPro" id="IPR013155">
    <property type="entry name" value="M/V/L/I-tRNA-synth_anticd-bd"/>
</dbReference>
<dbReference type="InterPro" id="IPR015413">
    <property type="entry name" value="Methionyl/Leucyl_tRNA_Synth"/>
</dbReference>
<dbReference type="InterPro" id="IPR014729">
    <property type="entry name" value="Rossmann-like_a/b/a_fold"/>
</dbReference>
<dbReference type="InterPro" id="IPR009080">
    <property type="entry name" value="tRNAsynth_Ia_anticodon-bd"/>
</dbReference>
<dbReference type="InterPro" id="IPR009008">
    <property type="entry name" value="Val/Leu/Ile-tRNA-synth_edit"/>
</dbReference>
<dbReference type="NCBIfam" id="TIGR00396">
    <property type="entry name" value="leuS_bact"/>
    <property type="match status" value="1"/>
</dbReference>
<dbReference type="PANTHER" id="PTHR43740:SF2">
    <property type="entry name" value="LEUCINE--TRNA LIGASE, MITOCHONDRIAL"/>
    <property type="match status" value="1"/>
</dbReference>
<dbReference type="PANTHER" id="PTHR43740">
    <property type="entry name" value="LEUCYL-TRNA SYNTHETASE"/>
    <property type="match status" value="1"/>
</dbReference>
<dbReference type="Pfam" id="PF08264">
    <property type="entry name" value="Anticodon_1"/>
    <property type="match status" value="1"/>
</dbReference>
<dbReference type="Pfam" id="PF00133">
    <property type="entry name" value="tRNA-synt_1"/>
    <property type="match status" value="2"/>
</dbReference>
<dbReference type="Pfam" id="PF13603">
    <property type="entry name" value="tRNA-synt_1_2"/>
    <property type="match status" value="1"/>
</dbReference>
<dbReference type="Pfam" id="PF09334">
    <property type="entry name" value="tRNA-synt_1g"/>
    <property type="match status" value="1"/>
</dbReference>
<dbReference type="PRINTS" id="PR00985">
    <property type="entry name" value="TRNASYNTHLEU"/>
</dbReference>
<dbReference type="SUPFAM" id="SSF47323">
    <property type="entry name" value="Anticodon-binding domain of a subclass of class I aminoacyl-tRNA synthetases"/>
    <property type="match status" value="1"/>
</dbReference>
<dbReference type="SUPFAM" id="SSF52374">
    <property type="entry name" value="Nucleotidylyl transferase"/>
    <property type="match status" value="1"/>
</dbReference>
<dbReference type="SUPFAM" id="SSF50677">
    <property type="entry name" value="ValRS/IleRS/LeuRS editing domain"/>
    <property type="match status" value="1"/>
</dbReference>
<dbReference type="PROSITE" id="PS00178">
    <property type="entry name" value="AA_TRNA_LIGASE_I"/>
    <property type="match status" value="1"/>
</dbReference>
<sequence length="833" mass="93907">MTFYDHTAIEPKWQAFWADNHTFKTGTDASKPKFYALDMFPYPSGAGLHVGHPEGYTATDILSRFKRAQGHNVLHPMGWDAFGLPAEQYAMDTGNDPAEFTAENIANFKRQINALGFSYDWDREVNTTDPNYYKWTQWIFTKLYEKGLAYEAEVPVNWVEELGTAIANEEVLPDGTSERGGYPVVRKPMRQWMLKITAYAERLLEDLEEVDWPESIKDMQRNWIDKSTGANVTFKVKDTDKDFTVFTTRPDTLFGATYAVLAPEHALVDAITTADQAEAVADYKRQASLKSDLARTDLAKEKTGVWTGSYAINPVNGNEMPVWIADYVLASYGTGAIMAVPAHDERDWEFAKQFNLDIIPVLEGGNVEEAAFTEDGLHINSDFLDGLDKASAIAKMVEWLEAEGVGNEKVTYRLRDWLFSRQRYWGEPIPIIHWEDGTSTAVPESELPLVLPVTKDIRPSGTGESPLANVTDWLEVTREDGVKGRRETNTMPQWAGSSWYYLRYIDPHNTEKLADEELLKQWLPVDIYVGGAEHAVLHLLYARFWHKVLYDLGVVPTKEPFQKLFNQGMILGTSYRDSRGALVATDKVEKRDGSFFHVETGEELEQAPAKMSKSLKNVVNPDDVVEQYGADTLRVYEMFMGPLDASIAWSEEGLEGSRKFLDRVYRLITTKEITEENSGALDKVYNETVKAVTEQVDQMKFNTAIAQLMVFVNAANKEDKLFSDYAKGFVQLIAPFAPHLGEELWQALTASGESISYVPWPSYDESKLVENDVEIVVQIKGKVKAKLVVAKDLSREELQEVALANEKVQAEIAGKDIIKVIAVPNKLVNIVIK</sequence>
<accession>Q1J8Q8</accession>
<proteinExistence type="inferred from homology"/>